<reference key="1">
    <citation type="journal article" date="2011" name="J. Bacteriol.">
        <title>Complete genome sequence of the plant growth-promoting endophyte Burkholderia phytofirmans strain PsJN.</title>
        <authorList>
            <person name="Weilharter A."/>
            <person name="Mitter B."/>
            <person name="Shin M.V."/>
            <person name="Chain P.S."/>
            <person name="Nowak J."/>
            <person name="Sessitsch A."/>
        </authorList>
    </citation>
    <scope>NUCLEOTIDE SEQUENCE [LARGE SCALE GENOMIC DNA]</scope>
    <source>
        <strain>DSM 17436 / LMG 22146 / PsJN</strain>
    </source>
</reference>
<protein>
    <recommendedName>
        <fullName evidence="1">Ketol-acid reductoisomerase (NADP(+))</fullName>
        <shortName evidence="1">KARI</shortName>
        <ecNumber evidence="1">1.1.1.86</ecNumber>
    </recommendedName>
    <alternativeName>
        <fullName evidence="1">Acetohydroxy-acid isomeroreductase</fullName>
        <shortName evidence="1">AHIR</shortName>
    </alternativeName>
    <alternativeName>
        <fullName evidence="1">Alpha-keto-beta-hydroxylacyl reductoisomerase</fullName>
    </alternativeName>
    <alternativeName>
        <fullName evidence="1">Ketol-acid reductoisomerase type 1</fullName>
    </alternativeName>
    <alternativeName>
        <fullName evidence="1">Ketol-acid reductoisomerase type I</fullName>
    </alternativeName>
</protein>
<sequence length="338" mass="36208">MKVFYDKDADLSLIKGKQVTIIGYGSQGHAHALNLKESGVNITVGLRKGGASWSKAENAGLQVKEVAEAVKGADVVMMLLPDEQIAEVYAKEVHANIKQGAALAFAHGFNVHYGQVIPRADLDVIMIAPKAPGHTVRGTYSQGGGVPHLIAVAQDKSGAARDIALSYAAANGGGRAGIIETNFREETETDLFGEQAVLCGGTVDLIKAGFETLVEAGYAPEMAYFECLHELKLIVDLIYEGGIANMNYSISNNAEYGEYVTGPRIVTAETKKAMKAVLTDIQTGEYAKSFIIENKAGAPTLQSRRRLTAEHQIETVGAKLRSMMPWIAANKLVDQSKN</sequence>
<accession>B2T2D1</accession>
<organism>
    <name type="scientific">Paraburkholderia phytofirmans (strain DSM 17436 / LMG 22146 / PsJN)</name>
    <name type="common">Burkholderia phytofirmans</name>
    <dbReference type="NCBI Taxonomy" id="398527"/>
    <lineage>
        <taxon>Bacteria</taxon>
        <taxon>Pseudomonadati</taxon>
        <taxon>Pseudomonadota</taxon>
        <taxon>Betaproteobacteria</taxon>
        <taxon>Burkholderiales</taxon>
        <taxon>Burkholderiaceae</taxon>
        <taxon>Paraburkholderia</taxon>
    </lineage>
</organism>
<proteinExistence type="inferred from homology"/>
<name>ILVC_PARPJ</name>
<dbReference type="EC" id="1.1.1.86" evidence="1"/>
<dbReference type="EMBL" id="CP001052">
    <property type="protein sequence ID" value="ACD15745.1"/>
    <property type="molecule type" value="Genomic_DNA"/>
</dbReference>
<dbReference type="RefSeq" id="WP_012432364.1">
    <property type="nucleotide sequence ID" value="NC_010681.1"/>
</dbReference>
<dbReference type="SMR" id="B2T2D1"/>
<dbReference type="STRING" id="398527.Bphyt_1330"/>
<dbReference type="GeneID" id="97052138"/>
<dbReference type="KEGG" id="bpy:Bphyt_1330"/>
<dbReference type="eggNOG" id="COG0059">
    <property type="taxonomic scope" value="Bacteria"/>
</dbReference>
<dbReference type="HOGENOM" id="CLU_033821_0_1_4"/>
<dbReference type="OrthoDB" id="9804088at2"/>
<dbReference type="UniPathway" id="UPA00047">
    <property type="reaction ID" value="UER00056"/>
</dbReference>
<dbReference type="UniPathway" id="UPA00049">
    <property type="reaction ID" value="UER00060"/>
</dbReference>
<dbReference type="Proteomes" id="UP000001739">
    <property type="component" value="Chromosome 1"/>
</dbReference>
<dbReference type="GO" id="GO:0005829">
    <property type="term" value="C:cytosol"/>
    <property type="evidence" value="ECO:0007669"/>
    <property type="project" value="TreeGrafter"/>
</dbReference>
<dbReference type="GO" id="GO:0004455">
    <property type="term" value="F:ketol-acid reductoisomerase activity"/>
    <property type="evidence" value="ECO:0007669"/>
    <property type="project" value="UniProtKB-UniRule"/>
</dbReference>
<dbReference type="GO" id="GO:0000287">
    <property type="term" value="F:magnesium ion binding"/>
    <property type="evidence" value="ECO:0007669"/>
    <property type="project" value="UniProtKB-UniRule"/>
</dbReference>
<dbReference type="GO" id="GO:0050661">
    <property type="term" value="F:NADP binding"/>
    <property type="evidence" value="ECO:0007669"/>
    <property type="project" value="InterPro"/>
</dbReference>
<dbReference type="GO" id="GO:0009097">
    <property type="term" value="P:isoleucine biosynthetic process"/>
    <property type="evidence" value="ECO:0007669"/>
    <property type="project" value="UniProtKB-UniRule"/>
</dbReference>
<dbReference type="GO" id="GO:0009099">
    <property type="term" value="P:L-valine biosynthetic process"/>
    <property type="evidence" value="ECO:0007669"/>
    <property type="project" value="UniProtKB-UniRule"/>
</dbReference>
<dbReference type="FunFam" id="3.40.50.720:FF:000023">
    <property type="entry name" value="Ketol-acid reductoisomerase (NADP(+))"/>
    <property type="match status" value="1"/>
</dbReference>
<dbReference type="Gene3D" id="6.10.240.10">
    <property type="match status" value="1"/>
</dbReference>
<dbReference type="Gene3D" id="3.40.50.720">
    <property type="entry name" value="NAD(P)-binding Rossmann-like Domain"/>
    <property type="match status" value="1"/>
</dbReference>
<dbReference type="HAMAP" id="MF_00435">
    <property type="entry name" value="IlvC"/>
    <property type="match status" value="1"/>
</dbReference>
<dbReference type="InterPro" id="IPR008927">
    <property type="entry name" value="6-PGluconate_DH-like_C_sf"/>
</dbReference>
<dbReference type="InterPro" id="IPR013023">
    <property type="entry name" value="KARI"/>
</dbReference>
<dbReference type="InterPro" id="IPR000506">
    <property type="entry name" value="KARI_C"/>
</dbReference>
<dbReference type="InterPro" id="IPR013116">
    <property type="entry name" value="KARI_N"/>
</dbReference>
<dbReference type="InterPro" id="IPR014359">
    <property type="entry name" value="KARI_prok"/>
</dbReference>
<dbReference type="InterPro" id="IPR036291">
    <property type="entry name" value="NAD(P)-bd_dom_sf"/>
</dbReference>
<dbReference type="NCBIfam" id="TIGR00465">
    <property type="entry name" value="ilvC"/>
    <property type="match status" value="1"/>
</dbReference>
<dbReference type="NCBIfam" id="NF004017">
    <property type="entry name" value="PRK05479.1"/>
    <property type="match status" value="1"/>
</dbReference>
<dbReference type="NCBIfam" id="NF009940">
    <property type="entry name" value="PRK13403.1"/>
    <property type="match status" value="1"/>
</dbReference>
<dbReference type="PANTHER" id="PTHR21371">
    <property type="entry name" value="KETOL-ACID REDUCTOISOMERASE, MITOCHONDRIAL"/>
    <property type="match status" value="1"/>
</dbReference>
<dbReference type="PANTHER" id="PTHR21371:SF1">
    <property type="entry name" value="KETOL-ACID REDUCTOISOMERASE, MITOCHONDRIAL"/>
    <property type="match status" value="1"/>
</dbReference>
<dbReference type="Pfam" id="PF01450">
    <property type="entry name" value="KARI_C"/>
    <property type="match status" value="1"/>
</dbReference>
<dbReference type="Pfam" id="PF07991">
    <property type="entry name" value="KARI_N"/>
    <property type="match status" value="1"/>
</dbReference>
<dbReference type="PIRSF" id="PIRSF000116">
    <property type="entry name" value="IlvC_gammaproteo"/>
    <property type="match status" value="1"/>
</dbReference>
<dbReference type="SUPFAM" id="SSF48179">
    <property type="entry name" value="6-phosphogluconate dehydrogenase C-terminal domain-like"/>
    <property type="match status" value="1"/>
</dbReference>
<dbReference type="SUPFAM" id="SSF51735">
    <property type="entry name" value="NAD(P)-binding Rossmann-fold domains"/>
    <property type="match status" value="1"/>
</dbReference>
<dbReference type="PROSITE" id="PS51851">
    <property type="entry name" value="KARI_C"/>
    <property type="match status" value="1"/>
</dbReference>
<dbReference type="PROSITE" id="PS51850">
    <property type="entry name" value="KARI_N"/>
    <property type="match status" value="1"/>
</dbReference>
<evidence type="ECO:0000255" key="1">
    <source>
        <dbReference type="HAMAP-Rule" id="MF_00435"/>
    </source>
</evidence>
<evidence type="ECO:0000255" key="2">
    <source>
        <dbReference type="PROSITE-ProRule" id="PRU01197"/>
    </source>
</evidence>
<evidence type="ECO:0000255" key="3">
    <source>
        <dbReference type="PROSITE-ProRule" id="PRU01198"/>
    </source>
</evidence>
<keyword id="KW-0028">Amino-acid biosynthesis</keyword>
<keyword id="KW-0100">Branched-chain amino acid biosynthesis</keyword>
<keyword id="KW-0460">Magnesium</keyword>
<keyword id="KW-0479">Metal-binding</keyword>
<keyword id="KW-0521">NADP</keyword>
<keyword id="KW-0560">Oxidoreductase</keyword>
<comment type="function">
    <text evidence="1">Involved in the biosynthesis of branched-chain amino acids (BCAA). Catalyzes an alkyl-migration followed by a ketol-acid reduction of (S)-2-acetolactate (S2AL) to yield (R)-2,3-dihydroxy-isovalerate. In the isomerase reaction, S2AL is rearranged via a Mg-dependent methyl migration to produce 3-hydroxy-3-methyl-2-ketobutyrate (HMKB). In the reductase reaction, this 2-ketoacid undergoes a metal-dependent reduction by NADPH to yield (R)-2,3-dihydroxy-isovalerate.</text>
</comment>
<comment type="catalytic activity">
    <reaction evidence="1">
        <text>(2R)-2,3-dihydroxy-3-methylbutanoate + NADP(+) = (2S)-2-acetolactate + NADPH + H(+)</text>
        <dbReference type="Rhea" id="RHEA:22068"/>
        <dbReference type="ChEBI" id="CHEBI:15378"/>
        <dbReference type="ChEBI" id="CHEBI:49072"/>
        <dbReference type="ChEBI" id="CHEBI:57783"/>
        <dbReference type="ChEBI" id="CHEBI:58349"/>
        <dbReference type="ChEBI" id="CHEBI:58476"/>
        <dbReference type="EC" id="1.1.1.86"/>
    </reaction>
</comment>
<comment type="catalytic activity">
    <reaction evidence="1">
        <text>(2R,3R)-2,3-dihydroxy-3-methylpentanoate + NADP(+) = (S)-2-ethyl-2-hydroxy-3-oxobutanoate + NADPH + H(+)</text>
        <dbReference type="Rhea" id="RHEA:13493"/>
        <dbReference type="ChEBI" id="CHEBI:15378"/>
        <dbReference type="ChEBI" id="CHEBI:49256"/>
        <dbReference type="ChEBI" id="CHEBI:49258"/>
        <dbReference type="ChEBI" id="CHEBI:57783"/>
        <dbReference type="ChEBI" id="CHEBI:58349"/>
        <dbReference type="EC" id="1.1.1.86"/>
    </reaction>
</comment>
<comment type="cofactor">
    <cofactor evidence="1">
        <name>Mg(2+)</name>
        <dbReference type="ChEBI" id="CHEBI:18420"/>
    </cofactor>
    <text evidence="1">Binds 2 magnesium ions per subunit.</text>
</comment>
<comment type="pathway">
    <text evidence="1">Amino-acid biosynthesis; L-isoleucine biosynthesis; L-isoleucine from 2-oxobutanoate: step 2/4.</text>
</comment>
<comment type="pathway">
    <text evidence="1">Amino-acid biosynthesis; L-valine biosynthesis; L-valine from pyruvate: step 2/4.</text>
</comment>
<comment type="similarity">
    <text evidence="1">Belongs to the ketol-acid reductoisomerase family.</text>
</comment>
<feature type="chain" id="PRO_1000190924" description="Ketol-acid reductoisomerase (NADP(+))">
    <location>
        <begin position="1"/>
        <end position="338"/>
    </location>
</feature>
<feature type="domain" description="KARI N-terminal Rossmann" evidence="2">
    <location>
        <begin position="1"/>
        <end position="181"/>
    </location>
</feature>
<feature type="domain" description="KARI C-terminal knotted" evidence="3">
    <location>
        <begin position="182"/>
        <end position="327"/>
    </location>
</feature>
<feature type="active site" evidence="1">
    <location>
        <position position="107"/>
    </location>
</feature>
<feature type="binding site" evidence="1">
    <location>
        <begin position="24"/>
        <end position="27"/>
    </location>
    <ligand>
        <name>NADP(+)</name>
        <dbReference type="ChEBI" id="CHEBI:58349"/>
    </ligand>
</feature>
<feature type="binding site" evidence="1">
    <location>
        <position position="47"/>
    </location>
    <ligand>
        <name>NADP(+)</name>
        <dbReference type="ChEBI" id="CHEBI:58349"/>
    </ligand>
</feature>
<feature type="binding site" evidence="1">
    <location>
        <position position="52"/>
    </location>
    <ligand>
        <name>NADP(+)</name>
        <dbReference type="ChEBI" id="CHEBI:58349"/>
    </ligand>
</feature>
<feature type="binding site" evidence="1">
    <location>
        <position position="133"/>
    </location>
    <ligand>
        <name>NADP(+)</name>
        <dbReference type="ChEBI" id="CHEBI:58349"/>
    </ligand>
</feature>
<feature type="binding site" evidence="1">
    <location>
        <position position="190"/>
    </location>
    <ligand>
        <name>Mg(2+)</name>
        <dbReference type="ChEBI" id="CHEBI:18420"/>
        <label>1</label>
    </ligand>
</feature>
<feature type="binding site" evidence="1">
    <location>
        <position position="190"/>
    </location>
    <ligand>
        <name>Mg(2+)</name>
        <dbReference type="ChEBI" id="CHEBI:18420"/>
        <label>2</label>
    </ligand>
</feature>
<feature type="binding site" evidence="1">
    <location>
        <position position="194"/>
    </location>
    <ligand>
        <name>Mg(2+)</name>
        <dbReference type="ChEBI" id="CHEBI:18420"/>
        <label>1</label>
    </ligand>
</feature>
<feature type="binding site" evidence="1">
    <location>
        <position position="226"/>
    </location>
    <ligand>
        <name>Mg(2+)</name>
        <dbReference type="ChEBI" id="CHEBI:18420"/>
        <label>2</label>
    </ligand>
</feature>
<feature type="binding site" evidence="1">
    <location>
        <position position="230"/>
    </location>
    <ligand>
        <name>Mg(2+)</name>
        <dbReference type="ChEBI" id="CHEBI:18420"/>
        <label>2</label>
    </ligand>
</feature>
<feature type="binding site" evidence="1">
    <location>
        <position position="251"/>
    </location>
    <ligand>
        <name>substrate</name>
    </ligand>
</feature>
<gene>
    <name evidence="1" type="primary">ilvC</name>
    <name type="ordered locus">Bphyt_1330</name>
</gene>